<evidence type="ECO:0000256" key="1">
    <source>
        <dbReference type="SAM" id="MobiDB-lite"/>
    </source>
</evidence>
<evidence type="ECO:0000269" key="2">
    <source>
    </source>
</evidence>
<evidence type="ECO:0000303" key="3">
    <source>
    </source>
</evidence>
<evidence type="ECO:0000305" key="4"/>
<evidence type="ECO:0000305" key="5">
    <source>
    </source>
</evidence>
<proteinExistence type="inferred from homology"/>
<name>SAT12_STACB</name>
<organism>
    <name type="scientific">Stachybotrys chartarum (strain CBS 109288 / IBT 7711)</name>
    <name type="common">Toxic black mold</name>
    <name type="synonym">Stilbospora chartarum</name>
    <dbReference type="NCBI Taxonomy" id="1280523"/>
    <lineage>
        <taxon>Eukaryota</taxon>
        <taxon>Fungi</taxon>
        <taxon>Dikarya</taxon>
        <taxon>Ascomycota</taxon>
        <taxon>Pezizomycotina</taxon>
        <taxon>Sordariomycetes</taxon>
        <taxon>Hypocreomycetidae</taxon>
        <taxon>Hypocreales</taxon>
        <taxon>Stachybotryaceae</taxon>
        <taxon>Stachybotrys</taxon>
    </lineage>
</organism>
<accession>A0A084API2</accession>
<dbReference type="EC" id="2.3.2.-" evidence="5"/>
<dbReference type="EMBL" id="KL648628">
    <property type="protein sequence ID" value="KEY67211.1"/>
    <property type="molecule type" value="Genomic_DNA"/>
</dbReference>
<dbReference type="SMR" id="A0A084API2"/>
<dbReference type="HOGENOM" id="CLU_552125_0_0_1"/>
<dbReference type="OrthoDB" id="265898at5125"/>
<dbReference type="Proteomes" id="UP000028045">
    <property type="component" value="Unassembled WGS sequence"/>
</dbReference>
<dbReference type="GO" id="GO:0016407">
    <property type="term" value="F:acetyltransferase activity"/>
    <property type="evidence" value="ECO:0007669"/>
    <property type="project" value="InterPro"/>
</dbReference>
<dbReference type="GO" id="GO:0043386">
    <property type="term" value="P:mycotoxin biosynthetic process"/>
    <property type="evidence" value="ECO:0007669"/>
    <property type="project" value="InterPro"/>
</dbReference>
<dbReference type="Gene3D" id="3.30.559.10">
    <property type="entry name" value="Chloramphenicol acetyltransferase-like domain"/>
    <property type="match status" value="1"/>
</dbReference>
<dbReference type="Gene3D" id="3.30.559.30">
    <property type="entry name" value="Nonribosomal peptide synthetase, condensation domain"/>
    <property type="match status" value="1"/>
</dbReference>
<dbReference type="InterPro" id="IPR023213">
    <property type="entry name" value="CAT-like_dom_sf"/>
</dbReference>
<dbReference type="InterPro" id="IPR009992">
    <property type="entry name" value="Tri3/Sat12/Sat16/Mac1"/>
</dbReference>
<dbReference type="PANTHER" id="PTHR42034">
    <property type="entry name" value="CHROMOSOME 7, WHOLE GENOME SHOTGUN SEQUENCE-RELATED"/>
    <property type="match status" value="1"/>
</dbReference>
<dbReference type="PANTHER" id="PTHR42034:SF1">
    <property type="entry name" value="CONDENSATION DOMAIN-CONTAINING PROTEIN"/>
    <property type="match status" value="1"/>
</dbReference>
<dbReference type="Pfam" id="PF07428">
    <property type="entry name" value="Tri3"/>
    <property type="match status" value="1"/>
</dbReference>
<protein>
    <recommendedName>
        <fullName evidence="3">Putative 15-O-acetyltransferase SAT12</fullName>
        <ecNumber evidence="5">2.3.2.-</ecNumber>
    </recommendedName>
    <alternativeName>
        <fullName evidence="3">Satratoxin biosynthesis SC2 cluster protein 13</fullName>
    </alternativeName>
</protein>
<gene>
    <name evidence="3" type="primary">SAT12</name>
    <name type="ORF">S7711_09750</name>
</gene>
<reference key="1">
    <citation type="journal article" date="2014" name="BMC Genomics">
        <title>Comparative genome sequencing reveals chemotype-specific gene clusters in the toxigenic black mold Stachybotrys.</title>
        <authorList>
            <person name="Semeiks J."/>
            <person name="Borek D."/>
            <person name="Otwinowski Z."/>
            <person name="Grishin N.V."/>
        </authorList>
    </citation>
    <scope>NUCLEOTIDE SEQUENCE [LARGE SCALE GENOMIC DNA]</scope>
    <scope>IDENTIFICATION</scope>
    <scope>FUNCTION</scope>
    <source>
        <strain>CBS 109288 / IBT 7711</strain>
    </source>
</reference>
<feature type="chain" id="PRO_0000442394" description="Putative 15-O-acetyltransferase SAT12">
    <location>
        <begin position="1"/>
        <end position="573"/>
    </location>
</feature>
<feature type="region of interest" description="Disordered" evidence="1">
    <location>
        <begin position="1"/>
        <end position="40"/>
    </location>
</feature>
<feature type="compositionally biased region" description="Low complexity" evidence="1">
    <location>
        <begin position="7"/>
        <end position="36"/>
    </location>
</feature>
<comment type="function">
    <text evidence="5">Putative 15-O-acetyltransferase; part of the satratoxin SC2 cluster involved in the biosynthesis of satratoxins, trichothecene mycotoxins that are associated with human food poisonings (PubMed:25015739). Satratoxins are suggested to be made by products of multiple gene clusters (SC1, SC2 and SC3) that encode 21 proteins in all, including polyketide synthases, acetyltransferases, and other enzymes expected to modify the trichothecene skeleton (PubMed:25015739). SC1 encodes 10 proteins, SAT1 to SAT10 (PubMed:25015739). The largest are SAT8, which encodes a putative polyketide synthase (PKS) with a conventional non-reducing architecture, and SAT10, a putative protein containing four ankyrin repeats and thus may be involved in protein scaffolding (PubMed:25015739). The putative short-chain reductase SAT3 may assist the PKS in some capacity (PubMed:25015739). SAT6 contains a secretory lipase domain and acts probably as a trichothecene esterase (PubMed:25015739). SAT5 encodes a putative acetyltransferase, and so, with SAT6, may affect endogenous protection from toxicity (PubMed:25015739). The probable transcription factor SAT9 may regulate the expression of the SC1 cluster (PubMed:25015739). SC2 encodes proteins SAT11 to SAT16, the largest of which encodes the putative reducing PKS SAT13 (PubMed:25015739). SAT11 is a cytochrome P450 monooxygenase, while SAT14 and SAT16 are probable acetyltransferases (PubMed:25015739). The SC2 cluster may be regulated by the transcription factor SAT15 (PubMed:25015739). SC3 is a small cluster that encodes 5 proteins, SAT17 to SAT21 (PubMed:25015739). SAT21 is a putative MFS-type transporter which may have a role in exporting secondary metabolites (PubMed:25015739). The four other proteins putatively encoded in SC3 include the taurine hydroxylase-like protein SAT17, the O-methyltransferase SAT18, the acetyltransferase SAT19, and the Cys6-type zinc finger SAT20, the latter being probably involved in regulation of SC3 expression (PubMed:25015739).</text>
</comment>
<comment type="pathway">
    <text evidence="2">Mycotoxin biosynthesis.</text>
</comment>
<comment type="miscellaneous">
    <text evidence="4">Trichothecenes are sesquiterpenoid toxins that act by inhibiting protein biosynthesis.</text>
</comment>
<comment type="similarity">
    <text evidence="4">Belongs to the trichothecene O-acetyltransferase family.</text>
</comment>
<sequence>MLDDDCSPTSSSEMSNASSREASITSRSSSTSGNNSLPEDRGAVVQLPTLNPSDYRWHPFPGDSSVLQRKAIGVEALVGIRDANSRGEYDFYNNIVLRVGNALELTLTRLKRAFVKAMLDARFENPSIACYGVWGQNKEQYLPHIQYKSFKSQSEALAWANNCIIIQATSLTGSELRAERLKKRRAQAVPQPSNPLDIIIYADVANQRNRLEPGTEVNILFLFNHLIWDGKGRYFTSELVQRATTILDQEKENIMPTHRWGEEKSRLDPPILDVMLVNLDKMGPDYDLAHRKLLNSQLQVGLSWGLPLTRNPGEPLQIRHCISREDSTKITDAVRARLGPKYNIGHLGHAATVLSLLKNNPIPPSTQDTAFLFSPLPVDGRPYLLEERKTPRYGNAQAAAVVELQKLASWGIKSDNLNGVKVALDDLAKKVKEDYDYWLTNLVAWRFKSSCTSEFIAFGSAIYQTPYLDPGAPKVKVGTGTSTDMVFLKAFCNDGRAESIIAYTMHGPSGKELFQVDDCFGGVDVLGSNAFIRMDTWKDAIRLTLCYNSGCFSDAVANSFTTDVAQYMLAYSW</sequence>
<keyword id="KW-0012">Acyltransferase</keyword>
<keyword id="KW-0808">Transferase</keyword>